<name>ZAM_SYNY3</name>
<accession>Q46363</accession>
<accession>P73254</accession>
<dbReference type="EMBL" id="X80179">
    <property type="protein sequence ID" value="CAA56462.1"/>
    <property type="molecule type" value="Genomic_DNA"/>
</dbReference>
<dbReference type="EMBL" id="BA000022">
    <property type="protein sequence ID" value="BAA17281.1"/>
    <property type="molecule type" value="Genomic_DNA"/>
</dbReference>
<dbReference type="PIR" id="S75367">
    <property type="entry name" value="S75367"/>
</dbReference>
<dbReference type="SMR" id="Q46363"/>
<dbReference type="FunCoup" id="Q46363">
    <property type="interactions" value="307"/>
</dbReference>
<dbReference type="STRING" id="1148.gene:10498144"/>
<dbReference type="PaxDb" id="1148-1652358"/>
<dbReference type="EnsemblBacteria" id="BAA17281">
    <property type="protein sequence ID" value="BAA17281"/>
    <property type="gene ID" value="BAA17281"/>
</dbReference>
<dbReference type="KEGG" id="syn:sll1910"/>
<dbReference type="eggNOG" id="COG0557">
    <property type="taxonomic scope" value="Bacteria"/>
</dbReference>
<dbReference type="InParanoid" id="Q46363"/>
<dbReference type="PhylomeDB" id="Q46363"/>
<dbReference type="Proteomes" id="UP000001425">
    <property type="component" value="Chromosome"/>
</dbReference>
<dbReference type="GO" id="GO:0004527">
    <property type="term" value="F:exonuclease activity"/>
    <property type="evidence" value="ECO:0007669"/>
    <property type="project" value="UniProtKB-KW"/>
</dbReference>
<dbReference type="GO" id="GO:0003723">
    <property type="term" value="F:RNA binding"/>
    <property type="evidence" value="ECO:0007669"/>
    <property type="project" value="InterPro"/>
</dbReference>
<dbReference type="GO" id="GO:0004540">
    <property type="term" value="F:RNA nuclease activity"/>
    <property type="evidence" value="ECO:0007669"/>
    <property type="project" value="InterPro"/>
</dbReference>
<dbReference type="CDD" id="cd04471">
    <property type="entry name" value="S1_RNase_R"/>
    <property type="match status" value="1"/>
</dbReference>
<dbReference type="FunFam" id="2.40.50.140:FF:000219">
    <property type="entry name" value="Ribonuclease R"/>
    <property type="match status" value="1"/>
</dbReference>
<dbReference type="FunFam" id="2.40.50.140:FF:000408">
    <property type="entry name" value="Ribonuclease R"/>
    <property type="match status" value="1"/>
</dbReference>
<dbReference type="Gene3D" id="2.40.50.140">
    <property type="entry name" value="Nucleic acid-binding proteins"/>
    <property type="match status" value="2"/>
</dbReference>
<dbReference type="InterPro" id="IPR011129">
    <property type="entry name" value="CSD"/>
</dbReference>
<dbReference type="InterPro" id="IPR040476">
    <property type="entry name" value="CSD2"/>
</dbReference>
<dbReference type="InterPro" id="IPR012340">
    <property type="entry name" value="NA-bd_OB-fold"/>
</dbReference>
<dbReference type="InterPro" id="IPR013223">
    <property type="entry name" value="RNase_B_OB_dom"/>
</dbReference>
<dbReference type="InterPro" id="IPR001900">
    <property type="entry name" value="RNase_II/R"/>
</dbReference>
<dbReference type="InterPro" id="IPR022966">
    <property type="entry name" value="RNase_II/R_CS"/>
</dbReference>
<dbReference type="InterPro" id="IPR050180">
    <property type="entry name" value="RNR_Ribonuclease"/>
</dbReference>
<dbReference type="InterPro" id="IPR003029">
    <property type="entry name" value="S1_domain"/>
</dbReference>
<dbReference type="PANTHER" id="PTHR23355:SF9">
    <property type="entry name" value="DIS3-LIKE EXONUCLEASE 2"/>
    <property type="match status" value="1"/>
</dbReference>
<dbReference type="PANTHER" id="PTHR23355">
    <property type="entry name" value="RIBONUCLEASE"/>
    <property type="match status" value="1"/>
</dbReference>
<dbReference type="Pfam" id="PF17876">
    <property type="entry name" value="CSD2"/>
    <property type="match status" value="1"/>
</dbReference>
<dbReference type="Pfam" id="PF08206">
    <property type="entry name" value="OB_RNB"/>
    <property type="match status" value="1"/>
</dbReference>
<dbReference type="Pfam" id="PF00773">
    <property type="entry name" value="RNB"/>
    <property type="match status" value="1"/>
</dbReference>
<dbReference type="Pfam" id="PF00575">
    <property type="entry name" value="S1"/>
    <property type="match status" value="1"/>
</dbReference>
<dbReference type="SMART" id="SM00357">
    <property type="entry name" value="CSP"/>
    <property type="match status" value="1"/>
</dbReference>
<dbReference type="SMART" id="SM00955">
    <property type="entry name" value="RNB"/>
    <property type="match status" value="1"/>
</dbReference>
<dbReference type="SMART" id="SM00316">
    <property type="entry name" value="S1"/>
    <property type="match status" value="1"/>
</dbReference>
<dbReference type="SUPFAM" id="SSF50249">
    <property type="entry name" value="Nucleic acid-binding proteins"/>
    <property type="match status" value="3"/>
</dbReference>
<dbReference type="PROSITE" id="PS01175">
    <property type="entry name" value="RIBONUCLEASE_II"/>
    <property type="match status" value="1"/>
</dbReference>
<dbReference type="PROSITE" id="PS50126">
    <property type="entry name" value="S1"/>
    <property type="match status" value="1"/>
</dbReference>
<sequence length="782" mass="87542">MDYSIATLLSYFVDDKLVAGKFLEKKLGCESPEAIEALQIALDALEKMGVLVKERGKYNRVTREDVVEARLRCSSKGFCFAIQDDEDATDIYVREGNLSNAWNGDRVLVKVIKDGTRRKSPEEQVHLILDRANPSLLAQVKKSEDNYRAVPLDDRLLFELELQDKEQNLGEAVDHLVHVSVLRYPIAQHPPLGEVTKVLGSDAEAAADTDIVSCKHDLPLGWTPEAIEALQSLPKVIEPGELKKRTWITAKLQLVTFGDGPRGETLPWQEVALSLESQANQWQVGIHITDIAHYIAEDSLLDQLARKRGTTVYLEEQICPLFPEGLIGRCSLIPDEDRLALSFFLTVDDRGEVTGFEYHSSVVKVDHQLDFSEVQTALADIESVSGELKPYGGLLQELFFQICPLIKSQRLQRGSFNLQTETASPRLDEGRLGVIMTQETLPIRSLLAELMVVLQREVALQLQALGIPGLYCGQVAPEGEDLTDIVKLAGNLDLGVKIDLEGDIIPQHYHHLSQGFESLPAKAVLNHLLANTLKIEKYFSHPAPHFALAYDSGYTHCVSPAQRYGDLVIQRLLKLVLTEGRDRRTKQMKTGVELNAHTCRNQISWNVLPPNLQETIEGDLHQLVLGLNDREQTAEDAEKDLLGLKKAEKMKARAGEIFRGLITGVQSYGFFVQIFDLLAEGLVHVSSLKDDWYEFRSRQCALVGRKSRTSYRLGNEVDVQVRSVDYYRQQIDLGAVNNAPKDSANMDFDDDDEDGDEREEQDTMDWDAMEDGDDDEGGAVIF</sequence>
<protein>
    <recommendedName>
        <fullName>Acetazolamide conferring resistance protein zam</fullName>
    </recommendedName>
</protein>
<proteinExistence type="inferred from homology"/>
<keyword id="KW-0269">Exonuclease</keyword>
<keyword id="KW-0378">Hydrolase</keyword>
<keyword id="KW-0540">Nuclease</keyword>
<keyword id="KW-1185">Reference proteome</keyword>
<evidence type="ECO:0000255" key="1"/>
<evidence type="ECO:0000255" key="2">
    <source>
        <dbReference type="PROSITE-ProRule" id="PRU00180"/>
    </source>
</evidence>
<evidence type="ECO:0000256" key="3">
    <source>
        <dbReference type="SAM" id="MobiDB-lite"/>
    </source>
</evidence>
<evidence type="ECO:0000305" key="4"/>
<organism>
    <name type="scientific">Synechocystis sp. (strain ATCC 27184 / PCC 6803 / Kazusa)</name>
    <dbReference type="NCBI Taxonomy" id="1111708"/>
    <lineage>
        <taxon>Bacteria</taxon>
        <taxon>Bacillati</taxon>
        <taxon>Cyanobacteriota</taxon>
        <taxon>Cyanophyceae</taxon>
        <taxon>Synechococcales</taxon>
        <taxon>Merismopediaceae</taxon>
        <taxon>Synechocystis</taxon>
    </lineage>
</organism>
<gene>
    <name type="primary">zam</name>
    <name type="ordered locus">sll1910</name>
</gene>
<feature type="chain" id="PRO_0000166417" description="Acetazolamide conferring resistance protein zam">
    <location>
        <begin position="1"/>
        <end position="782"/>
    </location>
</feature>
<feature type="domain" description="RNB" evidence="1">
    <location>
        <begin position="270"/>
        <end position="579"/>
    </location>
</feature>
<feature type="domain" description="S1 motif" evidence="2">
    <location>
        <begin position="655"/>
        <end position="736"/>
    </location>
</feature>
<feature type="region of interest" description="Disordered" evidence="3">
    <location>
        <begin position="737"/>
        <end position="782"/>
    </location>
</feature>
<feature type="compositionally biased region" description="Acidic residues" evidence="3">
    <location>
        <begin position="747"/>
        <end position="782"/>
    </location>
</feature>
<feature type="sequence conflict" description="In Ref. 2; BAA17281." evidence="4" ref="2">
    <original>N</original>
    <variation>K</variation>
    <location>
        <position position="59"/>
    </location>
</feature>
<feature type="sequence conflict" description="In Ref. 2; BAA17281." evidence="4" ref="2">
    <original>EQ</original>
    <variation>GA</variation>
    <location>
        <begin position="123"/>
        <end position="124"/>
    </location>
</feature>
<feature type="sequence conflict" description="In Ref. 2; BAA17281." evidence="4" ref="2">
    <original>TWITA</original>
    <variation>QDYR</variation>
    <location>
        <begin position="246"/>
        <end position="250"/>
    </location>
</feature>
<feature type="sequence conflict" description="In Ref. 2; BAA17281." evidence="4" ref="2">
    <original>G</original>
    <variation>A</variation>
    <location>
        <position position="479"/>
    </location>
</feature>
<feature type="sequence conflict" description="In Ref. 2; BAA17281." evidence="4" ref="2">
    <original>G</original>
    <variation>E</variation>
    <location>
        <position position="490"/>
    </location>
</feature>
<feature type="sequence conflict" description="In Ref. 2; BAA17281." evidence="4" ref="2">
    <original>G</original>
    <variation>A</variation>
    <location>
        <position position="515"/>
    </location>
</feature>
<feature type="sequence conflict" description="In Ref. 2; BAA17281." evidence="4" ref="2">
    <original>A</original>
    <variation>T</variation>
    <location>
        <position position="654"/>
    </location>
</feature>
<comment type="function">
    <text>Not known; control resistance to the carbonic anhydrase inhibitor acetazolamide.</text>
</comment>
<comment type="similarity">
    <text evidence="4">Belongs to the RNR ribonuclease family.</text>
</comment>
<reference key="1">
    <citation type="journal article" date="1995" name="Plant Mol. Biol.">
        <title>A protein is involved in accessibility of the inhibitor acetazolamide to the carbonic anhydrase(s) in the cyanobacterium Synechocystis PCC 6803.</title>
        <authorList>
            <person name="Beuf L."/>
            <person name="Bedu S."/>
            <person name="Cami B."/>
            <person name="Joset F."/>
        </authorList>
    </citation>
    <scope>NUCLEOTIDE SEQUENCE [GENOMIC DNA]</scope>
</reference>
<reference key="2">
    <citation type="journal article" date="1996" name="DNA Res.">
        <title>Sequence analysis of the genome of the unicellular cyanobacterium Synechocystis sp. strain PCC6803. II. Sequence determination of the entire genome and assignment of potential protein-coding regions.</title>
        <authorList>
            <person name="Kaneko T."/>
            <person name="Sato S."/>
            <person name="Kotani H."/>
            <person name="Tanaka A."/>
            <person name="Asamizu E."/>
            <person name="Nakamura Y."/>
            <person name="Miyajima N."/>
            <person name="Hirosawa M."/>
            <person name="Sugiura M."/>
            <person name="Sasamoto S."/>
            <person name="Kimura T."/>
            <person name="Hosouchi T."/>
            <person name="Matsuno A."/>
            <person name="Muraki A."/>
            <person name="Nakazaki N."/>
            <person name="Naruo K."/>
            <person name="Okumura S."/>
            <person name="Shimpo S."/>
            <person name="Takeuchi C."/>
            <person name="Wada T."/>
            <person name="Watanabe A."/>
            <person name="Yamada M."/>
            <person name="Yasuda M."/>
            <person name="Tabata S."/>
        </authorList>
    </citation>
    <scope>NUCLEOTIDE SEQUENCE [LARGE SCALE GENOMIC DNA]</scope>
    <source>
        <strain>ATCC 27184 / PCC 6803 / Kazusa</strain>
    </source>
</reference>